<gene>
    <name evidence="1" type="primary">coq7</name>
    <name type="ordered locus">BAV0509</name>
</gene>
<feature type="chain" id="PRO_0000338657" description="3-demethoxyubiquinol 3-hydroxylase">
    <location>
        <begin position="1"/>
        <end position="215"/>
    </location>
</feature>
<feature type="binding site" evidence="1">
    <location>
        <position position="64"/>
    </location>
    <ligand>
        <name>Fe cation</name>
        <dbReference type="ChEBI" id="CHEBI:24875"/>
        <label>1</label>
    </ligand>
</feature>
<feature type="binding site" evidence="1">
    <location>
        <position position="94"/>
    </location>
    <ligand>
        <name>Fe cation</name>
        <dbReference type="ChEBI" id="CHEBI:24875"/>
        <label>1</label>
    </ligand>
</feature>
<feature type="binding site" evidence="1">
    <location>
        <position position="94"/>
    </location>
    <ligand>
        <name>Fe cation</name>
        <dbReference type="ChEBI" id="CHEBI:24875"/>
        <label>2</label>
    </ligand>
</feature>
<feature type="binding site" evidence="1">
    <location>
        <position position="97"/>
    </location>
    <ligand>
        <name>Fe cation</name>
        <dbReference type="ChEBI" id="CHEBI:24875"/>
        <label>1</label>
    </ligand>
</feature>
<feature type="binding site" evidence="1">
    <location>
        <position position="146"/>
    </location>
    <ligand>
        <name>Fe cation</name>
        <dbReference type="ChEBI" id="CHEBI:24875"/>
        <label>2</label>
    </ligand>
</feature>
<feature type="binding site" evidence="1">
    <location>
        <position position="178"/>
    </location>
    <ligand>
        <name>Fe cation</name>
        <dbReference type="ChEBI" id="CHEBI:24875"/>
        <label>1</label>
    </ligand>
</feature>
<feature type="binding site" evidence="1">
    <location>
        <position position="178"/>
    </location>
    <ligand>
        <name>Fe cation</name>
        <dbReference type="ChEBI" id="CHEBI:24875"/>
        <label>2</label>
    </ligand>
</feature>
<feature type="binding site" evidence="1">
    <location>
        <position position="181"/>
    </location>
    <ligand>
        <name>Fe cation</name>
        <dbReference type="ChEBI" id="CHEBI:24875"/>
        <label>2</label>
    </ligand>
</feature>
<name>COQ7_BORA1</name>
<keyword id="KW-1003">Cell membrane</keyword>
<keyword id="KW-0408">Iron</keyword>
<keyword id="KW-0472">Membrane</keyword>
<keyword id="KW-0479">Metal-binding</keyword>
<keyword id="KW-0503">Monooxygenase</keyword>
<keyword id="KW-0560">Oxidoreductase</keyword>
<keyword id="KW-1185">Reference proteome</keyword>
<keyword id="KW-0831">Ubiquinone biosynthesis</keyword>
<accession>Q2KYH8</accession>
<dbReference type="EC" id="1.14.99.60" evidence="1"/>
<dbReference type="EMBL" id="AM167904">
    <property type="protein sequence ID" value="CAJ48114.1"/>
    <property type="molecule type" value="Genomic_DNA"/>
</dbReference>
<dbReference type="RefSeq" id="WP_012416205.1">
    <property type="nucleotide sequence ID" value="NC_010645.1"/>
</dbReference>
<dbReference type="SMR" id="Q2KYH8"/>
<dbReference type="STRING" id="360910.BAV0509"/>
<dbReference type="KEGG" id="bav:BAV0509"/>
<dbReference type="eggNOG" id="COG2941">
    <property type="taxonomic scope" value="Bacteria"/>
</dbReference>
<dbReference type="HOGENOM" id="CLU_088601_0_0_4"/>
<dbReference type="OrthoDB" id="5192789at2"/>
<dbReference type="UniPathway" id="UPA00232"/>
<dbReference type="Proteomes" id="UP000001977">
    <property type="component" value="Chromosome"/>
</dbReference>
<dbReference type="GO" id="GO:0005886">
    <property type="term" value="C:plasma membrane"/>
    <property type="evidence" value="ECO:0007669"/>
    <property type="project" value="UniProtKB-SubCell"/>
</dbReference>
<dbReference type="GO" id="GO:0008682">
    <property type="term" value="F:3-demethoxyubiquinol 3-hydroxylase activity"/>
    <property type="evidence" value="ECO:0007669"/>
    <property type="project" value="UniProtKB-EC"/>
</dbReference>
<dbReference type="GO" id="GO:0046872">
    <property type="term" value="F:metal ion binding"/>
    <property type="evidence" value="ECO:0007669"/>
    <property type="project" value="UniProtKB-KW"/>
</dbReference>
<dbReference type="GO" id="GO:0006744">
    <property type="term" value="P:ubiquinone biosynthetic process"/>
    <property type="evidence" value="ECO:0007669"/>
    <property type="project" value="UniProtKB-UniRule"/>
</dbReference>
<dbReference type="CDD" id="cd01042">
    <property type="entry name" value="DMQH"/>
    <property type="match status" value="1"/>
</dbReference>
<dbReference type="Gene3D" id="1.20.1260.10">
    <property type="match status" value="1"/>
</dbReference>
<dbReference type="HAMAP" id="MF_01658">
    <property type="entry name" value="COQ7"/>
    <property type="match status" value="1"/>
</dbReference>
<dbReference type="InterPro" id="IPR047809">
    <property type="entry name" value="COQ7_proteobact"/>
</dbReference>
<dbReference type="InterPro" id="IPR012347">
    <property type="entry name" value="Ferritin-like"/>
</dbReference>
<dbReference type="InterPro" id="IPR009078">
    <property type="entry name" value="Ferritin-like_SF"/>
</dbReference>
<dbReference type="InterPro" id="IPR011566">
    <property type="entry name" value="Ubq_synth_Coq7"/>
</dbReference>
<dbReference type="NCBIfam" id="NF033656">
    <property type="entry name" value="DMQ_monoox_COQ7"/>
    <property type="match status" value="1"/>
</dbReference>
<dbReference type="PANTHER" id="PTHR11237:SF4">
    <property type="entry name" value="5-DEMETHOXYUBIQUINONE HYDROXYLASE, MITOCHONDRIAL"/>
    <property type="match status" value="1"/>
</dbReference>
<dbReference type="PANTHER" id="PTHR11237">
    <property type="entry name" value="COENZYME Q10 BIOSYNTHESIS PROTEIN 7"/>
    <property type="match status" value="1"/>
</dbReference>
<dbReference type="Pfam" id="PF03232">
    <property type="entry name" value="COQ7"/>
    <property type="match status" value="1"/>
</dbReference>
<dbReference type="SUPFAM" id="SSF47240">
    <property type="entry name" value="Ferritin-like"/>
    <property type="match status" value="1"/>
</dbReference>
<reference key="1">
    <citation type="journal article" date="2006" name="J. Bacteriol.">
        <title>Comparison of the genome sequence of the poultry pathogen Bordetella avium with those of B. bronchiseptica, B. pertussis, and B. parapertussis reveals extensive diversity in surface structures associated with host interaction.</title>
        <authorList>
            <person name="Sebaihia M."/>
            <person name="Preston A."/>
            <person name="Maskell D.J."/>
            <person name="Kuzmiak H."/>
            <person name="Connell T.D."/>
            <person name="King N.D."/>
            <person name="Orndorff P.E."/>
            <person name="Miyamoto D.M."/>
            <person name="Thomson N.R."/>
            <person name="Harris D."/>
            <person name="Goble A."/>
            <person name="Lord A."/>
            <person name="Murphy L."/>
            <person name="Quail M.A."/>
            <person name="Rutter S."/>
            <person name="Squares R."/>
            <person name="Squares S."/>
            <person name="Woodward J."/>
            <person name="Parkhill J."/>
            <person name="Temple L.M."/>
        </authorList>
    </citation>
    <scope>NUCLEOTIDE SEQUENCE [LARGE SCALE GENOMIC DNA]</scope>
    <source>
        <strain>197N</strain>
    </source>
</reference>
<protein>
    <recommendedName>
        <fullName evidence="1">3-demethoxyubiquinol 3-hydroxylase</fullName>
        <shortName evidence="1">DMQ hydroxylase</shortName>
        <ecNumber evidence="1">1.14.99.60</ecNumber>
    </recommendedName>
    <alternativeName>
        <fullName evidence="1">2-nonaprenyl-3-methyl-6-methoxy-1,4-benzoquinol hydroxylase</fullName>
    </alternativeName>
</protein>
<sequence length="215" mass="23461">MNYASPRHAGPLDALLIEVDRALQVLSRSAVAGRAYPAHAAEAPLADTEKRHAAGLMRVNHVGEICAQALYRGQAVACRDAGTRELLREAAAEEVDHLVWCDRRLKELDSRPSLLNPLWYAGSFALGVAASVAGVPRNLGFMAETERQVEAHLDEHLRTLPAADERSREIVRQMKDDEAGHRESAERAGGIPLPAPVRGIMRAMSKVMTGTAYRL</sequence>
<comment type="function">
    <text evidence="1">Catalyzes the hydroxylation of 2-nonaprenyl-3-methyl-6-methoxy-1,4-benzoquinol during ubiquinone biosynthesis.</text>
</comment>
<comment type="catalytic activity">
    <reaction evidence="1">
        <text>a 5-methoxy-2-methyl-3-(all-trans-polyprenyl)benzene-1,4-diol + AH2 + O2 = a 3-demethylubiquinol + A + H2O</text>
        <dbReference type="Rhea" id="RHEA:50908"/>
        <dbReference type="Rhea" id="RHEA-COMP:10859"/>
        <dbReference type="Rhea" id="RHEA-COMP:10914"/>
        <dbReference type="ChEBI" id="CHEBI:13193"/>
        <dbReference type="ChEBI" id="CHEBI:15377"/>
        <dbReference type="ChEBI" id="CHEBI:15379"/>
        <dbReference type="ChEBI" id="CHEBI:17499"/>
        <dbReference type="ChEBI" id="CHEBI:84167"/>
        <dbReference type="ChEBI" id="CHEBI:84422"/>
        <dbReference type="EC" id="1.14.99.60"/>
    </reaction>
</comment>
<comment type="cofactor">
    <cofactor evidence="1">
        <name>Fe cation</name>
        <dbReference type="ChEBI" id="CHEBI:24875"/>
    </cofactor>
    <text evidence="1">Binds 2 iron ions per subunit.</text>
</comment>
<comment type="pathway">
    <text evidence="1">Cofactor biosynthesis; ubiquinone biosynthesis.</text>
</comment>
<comment type="subcellular location">
    <subcellularLocation>
        <location evidence="1">Cell membrane</location>
        <topology evidence="1">Peripheral membrane protein</topology>
    </subcellularLocation>
</comment>
<comment type="similarity">
    <text evidence="1">Belongs to the COQ7 family.</text>
</comment>
<evidence type="ECO:0000255" key="1">
    <source>
        <dbReference type="HAMAP-Rule" id="MF_01658"/>
    </source>
</evidence>
<organism>
    <name type="scientific">Bordetella avium (strain 197N)</name>
    <dbReference type="NCBI Taxonomy" id="360910"/>
    <lineage>
        <taxon>Bacteria</taxon>
        <taxon>Pseudomonadati</taxon>
        <taxon>Pseudomonadota</taxon>
        <taxon>Betaproteobacteria</taxon>
        <taxon>Burkholderiales</taxon>
        <taxon>Alcaligenaceae</taxon>
        <taxon>Bordetella</taxon>
    </lineage>
</organism>
<proteinExistence type="inferred from homology"/>